<proteinExistence type="inferred from homology"/>
<dbReference type="EC" id="2.6.1.16" evidence="1"/>
<dbReference type="EMBL" id="AE017194">
    <property type="protein sequence ID" value="AAS39094.1"/>
    <property type="molecule type" value="Genomic_DNA"/>
</dbReference>
<dbReference type="SMR" id="Q73F49"/>
<dbReference type="KEGG" id="bca:BCE_0158"/>
<dbReference type="HOGENOM" id="CLU_012520_7_1_9"/>
<dbReference type="Proteomes" id="UP000002527">
    <property type="component" value="Chromosome"/>
</dbReference>
<dbReference type="GO" id="GO:0005829">
    <property type="term" value="C:cytosol"/>
    <property type="evidence" value="ECO:0007669"/>
    <property type="project" value="TreeGrafter"/>
</dbReference>
<dbReference type="GO" id="GO:0097367">
    <property type="term" value="F:carbohydrate derivative binding"/>
    <property type="evidence" value="ECO:0007669"/>
    <property type="project" value="InterPro"/>
</dbReference>
<dbReference type="GO" id="GO:0004360">
    <property type="term" value="F:glutamine-fructose-6-phosphate transaminase (isomerizing) activity"/>
    <property type="evidence" value="ECO:0007669"/>
    <property type="project" value="UniProtKB-UniRule"/>
</dbReference>
<dbReference type="GO" id="GO:0005975">
    <property type="term" value="P:carbohydrate metabolic process"/>
    <property type="evidence" value="ECO:0007669"/>
    <property type="project" value="UniProtKB-UniRule"/>
</dbReference>
<dbReference type="GO" id="GO:0006002">
    <property type="term" value="P:fructose 6-phosphate metabolic process"/>
    <property type="evidence" value="ECO:0007669"/>
    <property type="project" value="TreeGrafter"/>
</dbReference>
<dbReference type="GO" id="GO:0006487">
    <property type="term" value="P:protein N-linked glycosylation"/>
    <property type="evidence" value="ECO:0007669"/>
    <property type="project" value="TreeGrafter"/>
</dbReference>
<dbReference type="GO" id="GO:0006047">
    <property type="term" value="P:UDP-N-acetylglucosamine metabolic process"/>
    <property type="evidence" value="ECO:0007669"/>
    <property type="project" value="TreeGrafter"/>
</dbReference>
<dbReference type="CDD" id="cd00714">
    <property type="entry name" value="GFAT"/>
    <property type="match status" value="1"/>
</dbReference>
<dbReference type="CDD" id="cd05008">
    <property type="entry name" value="SIS_GlmS_GlmD_1"/>
    <property type="match status" value="1"/>
</dbReference>
<dbReference type="CDD" id="cd05009">
    <property type="entry name" value="SIS_GlmS_GlmD_2"/>
    <property type="match status" value="1"/>
</dbReference>
<dbReference type="FunFam" id="3.40.50.10490:FF:000022">
    <property type="entry name" value="Glutamine--fructose-6-phosphate aminotransferase [isomerizing]"/>
    <property type="match status" value="1"/>
</dbReference>
<dbReference type="FunFam" id="3.60.20.10:FF:000006">
    <property type="entry name" value="Glutamine--fructose-6-phosphate aminotransferase [isomerizing]"/>
    <property type="match status" value="1"/>
</dbReference>
<dbReference type="Gene3D" id="3.40.50.10490">
    <property type="entry name" value="Glucose-6-phosphate isomerase like protein, domain 1"/>
    <property type="match status" value="2"/>
</dbReference>
<dbReference type="Gene3D" id="3.60.20.10">
    <property type="entry name" value="Glutamine Phosphoribosylpyrophosphate, subunit 1, domain 1"/>
    <property type="match status" value="1"/>
</dbReference>
<dbReference type="HAMAP" id="MF_00164">
    <property type="entry name" value="GlmS"/>
    <property type="match status" value="1"/>
</dbReference>
<dbReference type="InterPro" id="IPR017932">
    <property type="entry name" value="GATase_2_dom"/>
</dbReference>
<dbReference type="InterPro" id="IPR005855">
    <property type="entry name" value="GFAT"/>
</dbReference>
<dbReference type="InterPro" id="IPR047084">
    <property type="entry name" value="GFAT_N"/>
</dbReference>
<dbReference type="InterPro" id="IPR035466">
    <property type="entry name" value="GlmS/AgaS_SIS"/>
</dbReference>
<dbReference type="InterPro" id="IPR035490">
    <property type="entry name" value="GlmS/FrlB_SIS"/>
</dbReference>
<dbReference type="InterPro" id="IPR029055">
    <property type="entry name" value="Ntn_hydrolases_N"/>
</dbReference>
<dbReference type="InterPro" id="IPR001347">
    <property type="entry name" value="SIS_dom"/>
</dbReference>
<dbReference type="InterPro" id="IPR046348">
    <property type="entry name" value="SIS_dom_sf"/>
</dbReference>
<dbReference type="NCBIfam" id="TIGR01135">
    <property type="entry name" value="glmS"/>
    <property type="match status" value="1"/>
</dbReference>
<dbReference type="NCBIfam" id="NF001484">
    <property type="entry name" value="PRK00331.1"/>
    <property type="match status" value="1"/>
</dbReference>
<dbReference type="PANTHER" id="PTHR10937">
    <property type="entry name" value="GLUCOSAMINE--FRUCTOSE-6-PHOSPHATE AMINOTRANSFERASE, ISOMERIZING"/>
    <property type="match status" value="1"/>
</dbReference>
<dbReference type="PANTHER" id="PTHR10937:SF0">
    <property type="entry name" value="GLUTAMINE--FRUCTOSE-6-PHOSPHATE TRANSAMINASE (ISOMERIZING)"/>
    <property type="match status" value="1"/>
</dbReference>
<dbReference type="Pfam" id="PF13522">
    <property type="entry name" value="GATase_6"/>
    <property type="match status" value="1"/>
</dbReference>
<dbReference type="Pfam" id="PF01380">
    <property type="entry name" value="SIS"/>
    <property type="match status" value="2"/>
</dbReference>
<dbReference type="SUPFAM" id="SSF56235">
    <property type="entry name" value="N-terminal nucleophile aminohydrolases (Ntn hydrolases)"/>
    <property type="match status" value="1"/>
</dbReference>
<dbReference type="SUPFAM" id="SSF53697">
    <property type="entry name" value="SIS domain"/>
    <property type="match status" value="1"/>
</dbReference>
<dbReference type="PROSITE" id="PS51278">
    <property type="entry name" value="GATASE_TYPE_2"/>
    <property type="match status" value="1"/>
</dbReference>
<dbReference type="PROSITE" id="PS51464">
    <property type="entry name" value="SIS"/>
    <property type="match status" value="2"/>
</dbReference>
<accession>Q73F49</accession>
<organism>
    <name type="scientific">Bacillus cereus (strain ATCC 10987 / NRS 248)</name>
    <dbReference type="NCBI Taxonomy" id="222523"/>
    <lineage>
        <taxon>Bacteria</taxon>
        <taxon>Bacillati</taxon>
        <taxon>Bacillota</taxon>
        <taxon>Bacilli</taxon>
        <taxon>Bacillales</taxon>
        <taxon>Bacillaceae</taxon>
        <taxon>Bacillus</taxon>
        <taxon>Bacillus cereus group</taxon>
    </lineage>
</organism>
<feature type="initiator methionine" description="Removed" evidence="1">
    <location>
        <position position="1"/>
    </location>
</feature>
<feature type="chain" id="PRO_0000135294" description="Glutamine--fructose-6-phosphate aminotransferase [isomerizing]">
    <location>
        <begin position="2"/>
        <end position="600"/>
    </location>
</feature>
<feature type="domain" description="Glutamine amidotransferase type-2" evidence="1">
    <location>
        <begin position="2"/>
        <end position="217"/>
    </location>
</feature>
<feature type="domain" description="SIS 1" evidence="1">
    <location>
        <begin position="283"/>
        <end position="422"/>
    </location>
</feature>
<feature type="domain" description="SIS 2" evidence="1">
    <location>
        <begin position="452"/>
        <end position="590"/>
    </location>
</feature>
<feature type="active site" description="Nucleophile; for GATase activity" evidence="1">
    <location>
        <position position="2"/>
    </location>
</feature>
<feature type="active site" description="For Fru-6P isomerization activity" evidence="1">
    <location>
        <position position="595"/>
    </location>
</feature>
<evidence type="ECO:0000255" key="1">
    <source>
        <dbReference type="HAMAP-Rule" id="MF_00164"/>
    </source>
</evidence>
<keyword id="KW-0032">Aminotransferase</keyword>
<keyword id="KW-0963">Cytoplasm</keyword>
<keyword id="KW-0315">Glutamine amidotransferase</keyword>
<keyword id="KW-0677">Repeat</keyword>
<keyword id="KW-0808">Transferase</keyword>
<name>GLMS_BACC1</name>
<reference key="1">
    <citation type="journal article" date="2004" name="Nucleic Acids Res.">
        <title>The genome sequence of Bacillus cereus ATCC 10987 reveals metabolic adaptations and a large plasmid related to Bacillus anthracis pXO1.</title>
        <authorList>
            <person name="Rasko D.A."/>
            <person name="Ravel J."/>
            <person name="Oekstad O.A."/>
            <person name="Helgason E."/>
            <person name="Cer R.Z."/>
            <person name="Jiang L."/>
            <person name="Shores K.A."/>
            <person name="Fouts D.E."/>
            <person name="Tourasse N.J."/>
            <person name="Angiuoli S.V."/>
            <person name="Kolonay J.F."/>
            <person name="Nelson W.C."/>
            <person name="Kolstoe A.-B."/>
            <person name="Fraser C.M."/>
            <person name="Read T.D."/>
        </authorList>
    </citation>
    <scope>NUCLEOTIDE SEQUENCE [LARGE SCALE GENOMIC DNA]</scope>
    <source>
        <strain>ATCC 10987 / NRS 248</strain>
    </source>
</reference>
<gene>
    <name evidence="1" type="primary">glmS</name>
    <name type="ordered locus">BCE_0158</name>
</gene>
<comment type="function">
    <text evidence="1">Catalyzes the first step in hexosamine metabolism, converting fructose-6P into glucosamine-6P using glutamine as a nitrogen source.</text>
</comment>
<comment type="catalytic activity">
    <reaction evidence="1">
        <text>D-fructose 6-phosphate + L-glutamine = D-glucosamine 6-phosphate + L-glutamate</text>
        <dbReference type="Rhea" id="RHEA:13237"/>
        <dbReference type="ChEBI" id="CHEBI:29985"/>
        <dbReference type="ChEBI" id="CHEBI:58359"/>
        <dbReference type="ChEBI" id="CHEBI:58725"/>
        <dbReference type="ChEBI" id="CHEBI:61527"/>
        <dbReference type="EC" id="2.6.1.16"/>
    </reaction>
</comment>
<comment type="subunit">
    <text evidence="1">Homodimer.</text>
</comment>
<comment type="subcellular location">
    <subcellularLocation>
        <location evidence="1">Cytoplasm</location>
    </subcellularLocation>
</comment>
<protein>
    <recommendedName>
        <fullName evidence="1">Glutamine--fructose-6-phosphate aminotransferase [isomerizing]</fullName>
        <ecNumber evidence="1">2.6.1.16</ecNumber>
    </recommendedName>
    <alternativeName>
        <fullName evidence="1">D-fructose-6-phosphate amidotransferase</fullName>
    </alternativeName>
    <alternativeName>
        <fullName evidence="1">GFAT</fullName>
    </alternativeName>
    <alternativeName>
        <fullName evidence="1">Glucosamine-6-phosphate synthase</fullName>
    </alternativeName>
    <alternativeName>
        <fullName evidence="1">Hexosephosphate aminotransferase</fullName>
    </alternativeName>
    <alternativeName>
        <fullName evidence="1">L-glutamine--D-fructose-6-phosphate amidotransferase</fullName>
    </alternativeName>
</protein>
<sequence length="600" mass="65750">MCGIVGFIGEQDAKEILLKGLEKLEYRGYDSAGIAVQAENGVVVYKEKGRIAKLREIVDENVATSVGIGHTRWATHGVPSKVNAHPHQSTSKRFTLVHNGVIENYELVKKEYLQDVTFVSETDTEVIVQLMEQQVSTGLSVEEAFRNTLSLLHGSYAIGLLDAENPNMIYVAKNKSPLLVGVGDNFNVVASDAMAMLQVTDQFIELMDKEIVIVTKESITIKNLQGETIERAPFTAELDASDIEKGTYPHFMLKEIDEQPLVIRNIIQKYQDENGEIELDQDIRNAILDSDRIYIIACGTSYHAGLVGKQFIEKFAKMPVEVHVASEFSYNMPLLTERPFFIYISQSGETADSRAVLVQTNEMGHKALTITNVPGSTLSREADYTLPLYAGPEIAVASTKAYTAQLAVLSILAADIAKAKGEVLGFDLTHELGLVANAMVQLCDQKEEMDALAKQFLATTRNCFFIGRSVDFYVGLEGALKLKEISYIQAEGFAGGELKHGTIALIENGTPVIALATQEHVNLGIRGNVKEVVARGANPCIISMKGLEMEGDSFVLPAVHEALAPLVAVIPLQLISYYAALHRECDVDKPRNLAKSVTVE</sequence>